<reference key="1">
    <citation type="journal article" date="2004" name="Nature">
        <title>Genome evolution in yeasts.</title>
        <authorList>
            <person name="Dujon B."/>
            <person name="Sherman D."/>
            <person name="Fischer G."/>
            <person name="Durrens P."/>
            <person name="Casaregola S."/>
            <person name="Lafontaine I."/>
            <person name="de Montigny J."/>
            <person name="Marck C."/>
            <person name="Neuveglise C."/>
            <person name="Talla E."/>
            <person name="Goffard N."/>
            <person name="Frangeul L."/>
            <person name="Aigle M."/>
            <person name="Anthouard V."/>
            <person name="Babour A."/>
            <person name="Barbe V."/>
            <person name="Barnay S."/>
            <person name="Blanchin S."/>
            <person name="Beckerich J.-M."/>
            <person name="Beyne E."/>
            <person name="Bleykasten C."/>
            <person name="Boisrame A."/>
            <person name="Boyer J."/>
            <person name="Cattolico L."/>
            <person name="Confanioleri F."/>
            <person name="de Daruvar A."/>
            <person name="Despons L."/>
            <person name="Fabre E."/>
            <person name="Fairhead C."/>
            <person name="Ferry-Dumazet H."/>
            <person name="Groppi A."/>
            <person name="Hantraye F."/>
            <person name="Hennequin C."/>
            <person name="Jauniaux N."/>
            <person name="Joyet P."/>
            <person name="Kachouri R."/>
            <person name="Kerrest A."/>
            <person name="Koszul R."/>
            <person name="Lemaire M."/>
            <person name="Lesur I."/>
            <person name="Ma L."/>
            <person name="Muller H."/>
            <person name="Nicaud J.-M."/>
            <person name="Nikolski M."/>
            <person name="Oztas S."/>
            <person name="Ozier-Kalogeropoulos O."/>
            <person name="Pellenz S."/>
            <person name="Potier S."/>
            <person name="Richard G.-F."/>
            <person name="Straub M.-L."/>
            <person name="Suleau A."/>
            <person name="Swennen D."/>
            <person name="Tekaia F."/>
            <person name="Wesolowski-Louvel M."/>
            <person name="Westhof E."/>
            <person name="Wirth B."/>
            <person name="Zeniou-Meyer M."/>
            <person name="Zivanovic Y."/>
            <person name="Bolotin-Fukuhara M."/>
            <person name="Thierry A."/>
            <person name="Bouchier C."/>
            <person name="Caudron B."/>
            <person name="Scarpelli C."/>
            <person name="Gaillardin C."/>
            <person name="Weissenbach J."/>
            <person name="Wincker P."/>
            <person name="Souciet J.-L."/>
        </authorList>
    </citation>
    <scope>NUCLEOTIDE SEQUENCE [LARGE SCALE GENOMIC DNA]</scope>
    <source>
        <strain>ATCC 8585 / CBS 2359 / DSM 70799 / NBRC 1267 / NRRL Y-1140 / WM37</strain>
    </source>
</reference>
<keyword id="KW-0539">Nucleus</keyword>
<keyword id="KW-1185">Reference proteome</keyword>
<keyword id="KW-0804">Transcription</keyword>
<keyword id="KW-0805">Transcription regulation</keyword>
<proteinExistence type="inferred from homology"/>
<feature type="chain" id="PRO_0000343440" description="Transcription initiation factor TFIID subunit 4">
    <location>
        <begin position="1"/>
        <end position="366"/>
    </location>
</feature>
<feature type="domain" description="Histone-fold">
    <location>
        <begin position="170"/>
        <end position="238"/>
    </location>
</feature>
<feature type="region of interest" description="Disordered" evidence="2">
    <location>
        <begin position="1"/>
        <end position="121"/>
    </location>
</feature>
<feature type="compositionally biased region" description="Polar residues" evidence="2">
    <location>
        <begin position="63"/>
        <end position="80"/>
    </location>
</feature>
<feature type="compositionally biased region" description="Low complexity" evidence="2">
    <location>
        <begin position="81"/>
        <end position="90"/>
    </location>
</feature>
<evidence type="ECO:0000250" key="1"/>
<evidence type="ECO:0000256" key="2">
    <source>
        <dbReference type="SAM" id="MobiDB-lite"/>
    </source>
</evidence>
<evidence type="ECO:0000305" key="3"/>
<protein>
    <recommendedName>
        <fullName>Transcription initiation factor TFIID subunit 4</fullName>
    </recommendedName>
    <alternativeName>
        <fullName>TBP-associated factor 4</fullName>
    </alternativeName>
</protein>
<accession>Q6CUC6</accession>
<comment type="function">
    <text evidence="1">Functions as a component of the DNA-binding general transcription factor complex TFIID. Binding of TFIID to a promoter (with or without TATA element) is the initial step in pre-initiation complex (PIC) formation. TFIID plays a key role in the regulation of gene expression by RNA polymerase II through different activities such as transcription activator interaction, core promoter recognition and selectivity, TFIIA and TFIIB interaction, chromatin modification (histone acetylation by TAF1), facilitation of DNA opening and initiation of transcription (By similarity).</text>
</comment>
<comment type="subunit">
    <text evidence="1">The 1.2 MDa TFIID complex is composed of TATA binding protein (TBP) and the 14 TBP-associated factors.</text>
</comment>
<comment type="subcellular location">
    <subcellularLocation>
        <location evidence="1">Nucleus</location>
    </subcellularLocation>
</comment>
<comment type="similarity">
    <text evidence="3">Belongs to the TAF4 family.</text>
</comment>
<gene>
    <name type="primary">TAF4</name>
    <name type="ordered locus">KLLA0C05962g</name>
</gene>
<organism>
    <name type="scientific">Kluyveromyces lactis (strain ATCC 8585 / CBS 2359 / DSM 70799 / NBRC 1267 / NRRL Y-1140 / WM37)</name>
    <name type="common">Yeast</name>
    <name type="synonym">Candida sphaerica</name>
    <dbReference type="NCBI Taxonomy" id="284590"/>
    <lineage>
        <taxon>Eukaryota</taxon>
        <taxon>Fungi</taxon>
        <taxon>Dikarya</taxon>
        <taxon>Ascomycota</taxon>
        <taxon>Saccharomycotina</taxon>
        <taxon>Saccharomycetes</taxon>
        <taxon>Saccharomycetales</taxon>
        <taxon>Saccharomycetaceae</taxon>
        <taxon>Kluyveromyces</taxon>
    </lineage>
</organism>
<sequence length="366" mass="40115">MAKSPKRKNSEPEDLSSNKRSKSFEFGKVENGLEPSGSDFGSDLPTPFDTMVTEQPLALPKASSPTTNLASPRNSSTPNLKTTSTTSKQSQKAEQKKNAGGSTGSTTASTTKPQQSDPDKLSDALLSAGVDIREEEALLSSTVARTKATGISANNQVPSHPPFLHPKNISDFMKRIASEQNFHQDFNKNTDILGLMSTACELYMRDVITNSLILSIHRRKGVKLNTGRRSEVSRSLRDLALRQKTQEERRVQRRIALGLEKQTTDARLDTEETQYRASNATANLMIAGGNKKKYSWLTAGSKSSSTDLKNQGNVSSAVAARGEMGIKYREAREEPGIVMRDLLLALENRRVGVNNVITKGYARIRD</sequence>
<name>TAF4_KLULA</name>
<dbReference type="EMBL" id="CR382123">
    <property type="protein sequence ID" value="CAH01314.1"/>
    <property type="molecule type" value="Genomic_DNA"/>
</dbReference>
<dbReference type="RefSeq" id="XP_452463.1">
    <property type="nucleotide sequence ID" value="XM_452463.1"/>
</dbReference>
<dbReference type="SMR" id="Q6CUC6"/>
<dbReference type="FunCoup" id="Q6CUC6">
    <property type="interactions" value="384"/>
</dbReference>
<dbReference type="STRING" id="284590.Q6CUC6"/>
<dbReference type="PaxDb" id="284590-Q6CUC6"/>
<dbReference type="KEGG" id="kla:KLLA0_C05962g"/>
<dbReference type="eggNOG" id="KOG2341">
    <property type="taxonomic scope" value="Eukaryota"/>
</dbReference>
<dbReference type="HOGENOM" id="CLU_036634_0_0_1"/>
<dbReference type="InParanoid" id="Q6CUC6"/>
<dbReference type="OMA" id="YGWLTSS"/>
<dbReference type="Proteomes" id="UP000000598">
    <property type="component" value="Chromosome C"/>
</dbReference>
<dbReference type="GO" id="GO:0005669">
    <property type="term" value="C:transcription factor TFIID complex"/>
    <property type="evidence" value="ECO:0007669"/>
    <property type="project" value="InterPro"/>
</dbReference>
<dbReference type="GO" id="GO:0003677">
    <property type="term" value="F:DNA binding"/>
    <property type="evidence" value="ECO:0007669"/>
    <property type="project" value="TreeGrafter"/>
</dbReference>
<dbReference type="GO" id="GO:0016251">
    <property type="term" value="F:RNA polymerase II general transcription initiation factor activity"/>
    <property type="evidence" value="ECO:0007669"/>
    <property type="project" value="TreeGrafter"/>
</dbReference>
<dbReference type="GO" id="GO:0006367">
    <property type="term" value="P:transcription initiation at RNA polymerase II promoter"/>
    <property type="evidence" value="ECO:0007669"/>
    <property type="project" value="TreeGrafter"/>
</dbReference>
<dbReference type="InterPro" id="IPR045144">
    <property type="entry name" value="TAF4"/>
</dbReference>
<dbReference type="InterPro" id="IPR007900">
    <property type="entry name" value="TAF4_C"/>
</dbReference>
<dbReference type="PANTHER" id="PTHR15138">
    <property type="entry name" value="TRANSCRIPTION INITIATION FACTOR TFIID SUBUNIT 4"/>
    <property type="match status" value="1"/>
</dbReference>
<dbReference type="PANTHER" id="PTHR15138:SF14">
    <property type="entry name" value="TRANSCRIPTION INITIATION FACTOR TFIID SUBUNIT 4"/>
    <property type="match status" value="1"/>
</dbReference>
<dbReference type="Pfam" id="PF05236">
    <property type="entry name" value="TAF4"/>
    <property type="match status" value="1"/>
</dbReference>